<keyword id="KW-1035">Host cytoplasm</keyword>
<keyword id="KW-1185">Reference proteome</keyword>
<evidence type="ECO:0000269" key="1">
    <source>
    </source>
</evidence>
<evidence type="ECO:0000305" key="2"/>
<accession>Q80872</accession>
<accession>Q6TNG1</accession>
<reference key="1">
    <citation type="journal article" date="1995" name="J. Gen. Virol.">
        <title>Sequence and expression of the ns2 protein gene of human coronavirus OC43.</title>
        <authorList>
            <person name="Labonte P."/>
            <person name="Mounir S."/>
            <person name="Talbot P.J."/>
        </authorList>
    </citation>
    <scope>NUCLEOTIDE SEQUENCE [MRNA]</scope>
    <scope>SUBCELLULAR LOCATION</scope>
</reference>
<reference key="2">
    <citation type="journal article" date="2005" name="J. Virol.">
        <title>Complete genomic sequence of human coronavirus OC43: molecular clock analysis suggests a relatively recent zoonotic coronavirus transmission event.</title>
        <authorList>
            <person name="Vijgen L."/>
            <person name="Keyaerts E."/>
            <person name="Moes E."/>
            <person name="Thoelen I."/>
            <person name="Wollants E."/>
            <person name="Lemey P."/>
            <person name="Vandamme A.M."/>
            <person name="Van Ranst M."/>
        </authorList>
    </citation>
    <scope>NUCLEOTIDE SEQUENCE [GENOMIC RNA]</scope>
    <source>
        <strain>Isolate ATCC VR-759</strain>
    </source>
</reference>
<reference key="3">
    <citation type="journal article" date="2005" name="Virology">
        <title>Circulation of genetically distinct contemporary human coronavirus OC43 strains.</title>
        <authorList>
            <person name="Vijgen L."/>
            <person name="Keyaerts E."/>
            <person name="Lemey P."/>
            <person name="Moes E."/>
            <person name="Li S."/>
            <person name="Vandamme A.M."/>
            <person name="Van Ranst M."/>
        </authorList>
    </citation>
    <scope>NUCLEOTIDE SEQUENCE [GENOMIC RNA]</scope>
    <source>
        <strain>Isolate 19572 Belgium 2004</strain>
        <strain>Isolate 87309 Belgium 2003</strain>
    </source>
</reference>
<reference key="4">
    <citation type="journal article" date="2004" name="J. Virol.">
        <title>Human respiratory coronavirus OC43: genetic stability and neuroinvasion.</title>
        <authorList>
            <person name="St Jean J.R."/>
            <person name="Jacomy H."/>
            <person name="Desforges M."/>
            <person name="Vabret A."/>
            <person name="Freymuth F."/>
            <person name="Talbot P.J."/>
        </authorList>
    </citation>
    <scope>NUCLEOTIDE SEQUENCE [GENOMIC RNA]</scope>
    <source>
        <strain>Isolate ATCC VR-759</strain>
        <strain>Isolate clinical OC43-Paris</strain>
    </source>
</reference>
<sequence length="278" mass="32216">MAVAYADKPNHFINFPLTHFQGFVLNYKGLQFQILDEGVDCKIQTAPHISLTMLDIQPEDYKSVDVAIQEVIDDMHWGDGFQIKFENPHILGRCIVLDVKGVEELHDDLVNYIRDKGCVADQSRKWIGHCTIAQLTDAALSIKENVDFINSMQFNYKITINPSSPARLEIVKLGAEKKDGFYETIVSHWMGIRFEYTSPTDKLAMIMGYCCLDVVRKELEEGDLPENDDDAWFKLSYHYENNSWFFRHVYRKSFHFRKACQNLDCNCLGFYESPVEED</sequence>
<protein>
    <recommendedName>
        <fullName>Non-structural protein 2a</fullName>
        <shortName>ns2a</shortName>
    </recommendedName>
    <alternativeName>
        <fullName>32 kDa accessory protein</fullName>
    </alternativeName>
    <alternativeName>
        <fullName>32 kDa non-structural protein</fullName>
    </alternativeName>
    <alternativeName>
        <fullName>ns2</fullName>
    </alternativeName>
</protein>
<organismHost>
    <name type="scientific">Homo sapiens</name>
    <name type="common">Human</name>
    <dbReference type="NCBI Taxonomy" id="9606"/>
</organismHost>
<feature type="chain" id="PRO_0000106067" description="Non-structural protein 2a">
    <location>
        <begin position="1"/>
        <end position="278"/>
    </location>
</feature>
<feature type="sequence variant" description="In strain: Isolate ATCC VR-759, Isolate clinical OC43-Paris, Isolate 19572 Belgium 2004 and Isolate 87309 Belgium 2003.">
    <original>P</original>
    <variation>S</variation>
    <location>
        <position position="274"/>
    </location>
</feature>
<feature type="sequence variant" description="In strain: Isolate ATCC VR-759, Isolate clinical OC43-Paris, Isolate 19572 Belgium 2004 and Isolate 87309 Belgium 2003.">
    <original>D</original>
    <variation>Y</variation>
    <location>
        <position position="278"/>
    </location>
</feature>
<gene>
    <name type="ORF">2a</name>
</gene>
<comment type="subcellular location">
    <subcellularLocation>
        <location evidence="1">Host cytoplasm</location>
    </subcellularLocation>
</comment>
<comment type="similarity">
    <text evidence="2">Belongs to the coronaviruses ns2a protein family.</text>
</comment>
<dbReference type="EMBL" id="L37833">
    <property type="protein sequence ID" value="AAA74377.1"/>
    <property type="molecule type" value="mRNA"/>
</dbReference>
<dbReference type="EMBL" id="AY391777">
    <property type="protein sequence ID" value="AAR01013.1"/>
    <property type="molecule type" value="Genomic_RNA"/>
</dbReference>
<dbReference type="EMBL" id="AY903459">
    <property type="protein sequence ID" value="AAX85667.1"/>
    <property type="molecule type" value="Genomic_RNA"/>
</dbReference>
<dbReference type="EMBL" id="AY903460">
    <property type="protein sequence ID" value="AAX85676.1"/>
    <property type="molecule type" value="Genomic_RNA"/>
</dbReference>
<dbReference type="EMBL" id="AY585228">
    <property type="protein sequence ID" value="AAT84352.1"/>
    <property type="molecule type" value="Genomic_RNA"/>
</dbReference>
<dbReference type="EMBL" id="AY585229">
    <property type="protein sequence ID" value="AAT84360.1"/>
    <property type="molecule type" value="Genomic_RNA"/>
</dbReference>
<dbReference type="SMR" id="Q80872"/>
<dbReference type="Proteomes" id="UP000007552">
    <property type="component" value="Genome"/>
</dbReference>
<dbReference type="Proteomes" id="UP000100580">
    <property type="component" value="Genome"/>
</dbReference>
<dbReference type="Proteomes" id="UP000159995">
    <property type="component" value="Genome"/>
</dbReference>
<dbReference type="Proteomes" id="UP000161137">
    <property type="component" value="Genome"/>
</dbReference>
<dbReference type="Proteomes" id="UP000180344">
    <property type="component" value="Genome"/>
</dbReference>
<dbReference type="GO" id="GO:0030430">
    <property type="term" value="C:host cell cytoplasm"/>
    <property type="evidence" value="ECO:0007669"/>
    <property type="project" value="UniProtKB-SubCell"/>
</dbReference>
<dbReference type="Gene3D" id="3.90.1140.10">
    <property type="entry name" value="Cyclic phosphodiesterase"/>
    <property type="match status" value="1"/>
</dbReference>
<dbReference type="InterPro" id="IPR007878">
    <property type="entry name" value="Coronavirus_NS2A"/>
</dbReference>
<dbReference type="InterPro" id="IPR039573">
    <property type="entry name" value="NS2A-like"/>
</dbReference>
<dbReference type="Pfam" id="PF05213">
    <property type="entry name" value="Corona_NS2A"/>
    <property type="match status" value="1"/>
</dbReference>
<dbReference type="PIRSF" id="PIRSF003890">
    <property type="entry name" value="LigT_coronavirus"/>
    <property type="match status" value="1"/>
</dbReference>
<proteinExistence type="evidence at transcript level"/>
<name>NS2A_CVHOC</name>
<organism>
    <name type="scientific">Human coronavirus OC43</name>
    <name type="common">HCoV-OC43</name>
    <dbReference type="NCBI Taxonomy" id="31631"/>
    <lineage>
        <taxon>Viruses</taxon>
        <taxon>Riboviria</taxon>
        <taxon>Orthornavirae</taxon>
        <taxon>Pisuviricota</taxon>
        <taxon>Pisoniviricetes</taxon>
        <taxon>Nidovirales</taxon>
        <taxon>Cornidovirineae</taxon>
        <taxon>Coronaviridae</taxon>
        <taxon>Orthocoronavirinae</taxon>
        <taxon>Betacoronavirus</taxon>
        <taxon>Embecovirus</taxon>
        <taxon>Betacoronavirus 1</taxon>
    </lineage>
</organism>